<organism>
    <name type="scientific">Mus musculus</name>
    <name type="common">Mouse</name>
    <dbReference type="NCBI Taxonomy" id="10090"/>
    <lineage>
        <taxon>Eukaryota</taxon>
        <taxon>Metazoa</taxon>
        <taxon>Chordata</taxon>
        <taxon>Craniata</taxon>
        <taxon>Vertebrata</taxon>
        <taxon>Euteleostomi</taxon>
        <taxon>Mammalia</taxon>
        <taxon>Eutheria</taxon>
        <taxon>Euarchontoglires</taxon>
        <taxon>Glires</taxon>
        <taxon>Rodentia</taxon>
        <taxon>Myomorpha</taxon>
        <taxon>Muroidea</taxon>
        <taxon>Muridae</taxon>
        <taxon>Murinae</taxon>
        <taxon>Mus</taxon>
        <taxon>Mus</taxon>
    </lineage>
</organism>
<keyword id="KW-0007">Acetylation</keyword>
<keyword id="KW-0025">Alternative splicing</keyword>
<keyword id="KW-1003">Cell membrane</keyword>
<keyword id="KW-0175">Coiled coil</keyword>
<keyword id="KW-0963">Cytoplasm</keyword>
<keyword id="KW-0206">Cytoskeleton</keyword>
<keyword id="KW-0273">Eye lens protein</keyword>
<keyword id="KW-0403">Intermediate filament</keyword>
<keyword id="KW-0449">Lipoprotein</keyword>
<keyword id="KW-0472">Membrane</keyword>
<keyword id="KW-0519">Myristate</keyword>
<keyword id="KW-0597">Phosphoprotein</keyword>
<keyword id="KW-1185">Reference proteome</keyword>
<keyword id="KW-0677">Repeat</keyword>
<name>BFSP1_MOUSE</name>
<reference key="1">
    <citation type="journal article" date="1997" name="Gene">
        <title>Gene structure and sequence comparisons of the eye lens specific protein, filensin, from rat and mouse: implications for protein classification and assembly.</title>
        <authorList>
            <person name="Masaki S."/>
            <person name="Quinlan R.A."/>
        </authorList>
    </citation>
    <scope>NUCLEOTIDE SEQUENCE [MRNA] (ISOFORM 1)</scope>
    <source>
        <strain>129/SvJ</strain>
        <tissue>Lens</tissue>
    </source>
</reference>
<reference key="2">
    <citation type="journal article" date="2005" name="Science">
        <title>The transcriptional landscape of the mammalian genome.</title>
        <authorList>
            <person name="Carninci P."/>
            <person name="Kasukawa T."/>
            <person name="Katayama S."/>
            <person name="Gough J."/>
            <person name="Frith M.C."/>
            <person name="Maeda N."/>
            <person name="Oyama R."/>
            <person name="Ravasi T."/>
            <person name="Lenhard B."/>
            <person name="Wells C."/>
            <person name="Kodzius R."/>
            <person name="Shimokawa K."/>
            <person name="Bajic V.B."/>
            <person name="Brenner S.E."/>
            <person name="Batalov S."/>
            <person name="Forrest A.R."/>
            <person name="Zavolan M."/>
            <person name="Davis M.J."/>
            <person name="Wilming L.G."/>
            <person name="Aidinis V."/>
            <person name="Allen J.E."/>
            <person name="Ambesi-Impiombato A."/>
            <person name="Apweiler R."/>
            <person name="Aturaliya R.N."/>
            <person name="Bailey T.L."/>
            <person name="Bansal M."/>
            <person name="Baxter L."/>
            <person name="Beisel K.W."/>
            <person name="Bersano T."/>
            <person name="Bono H."/>
            <person name="Chalk A.M."/>
            <person name="Chiu K.P."/>
            <person name="Choudhary V."/>
            <person name="Christoffels A."/>
            <person name="Clutterbuck D.R."/>
            <person name="Crowe M.L."/>
            <person name="Dalla E."/>
            <person name="Dalrymple B.P."/>
            <person name="de Bono B."/>
            <person name="Della Gatta G."/>
            <person name="di Bernardo D."/>
            <person name="Down T."/>
            <person name="Engstrom P."/>
            <person name="Fagiolini M."/>
            <person name="Faulkner G."/>
            <person name="Fletcher C.F."/>
            <person name="Fukushima T."/>
            <person name="Furuno M."/>
            <person name="Futaki S."/>
            <person name="Gariboldi M."/>
            <person name="Georgii-Hemming P."/>
            <person name="Gingeras T.R."/>
            <person name="Gojobori T."/>
            <person name="Green R.E."/>
            <person name="Gustincich S."/>
            <person name="Harbers M."/>
            <person name="Hayashi Y."/>
            <person name="Hensch T.K."/>
            <person name="Hirokawa N."/>
            <person name="Hill D."/>
            <person name="Huminiecki L."/>
            <person name="Iacono M."/>
            <person name="Ikeo K."/>
            <person name="Iwama A."/>
            <person name="Ishikawa T."/>
            <person name="Jakt M."/>
            <person name="Kanapin A."/>
            <person name="Katoh M."/>
            <person name="Kawasawa Y."/>
            <person name="Kelso J."/>
            <person name="Kitamura H."/>
            <person name="Kitano H."/>
            <person name="Kollias G."/>
            <person name="Krishnan S.P."/>
            <person name="Kruger A."/>
            <person name="Kummerfeld S.K."/>
            <person name="Kurochkin I.V."/>
            <person name="Lareau L.F."/>
            <person name="Lazarevic D."/>
            <person name="Lipovich L."/>
            <person name="Liu J."/>
            <person name="Liuni S."/>
            <person name="McWilliam S."/>
            <person name="Madan Babu M."/>
            <person name="Madera M."/>
            <person name="Marchionni L."/>
            <person name="Matsuda H."/>
            <person name="Matsuzawa S."/>
            <person name="Miki H."/>
            <person name="Mignone F."/>
            <person name="Miyake S."/>
            <person name="Morris K."/>
            <person name="Mottagui-Tabar S."/>
            <person name="Mulder N."/>
            <person name="Nakano N."/>
            <person name="Nakauchi H."/>
            <person name="Ng P."/>
            <person name="Nilsson R."/>
            <person name="Nishiguchi S."/>
            <person name="Nishikawa S."/>
            <person name="Nori F."/>
            <person name="Ohara O."/>
            <person name="Okazaki Y."/>
            <person name="Orlando V."/>
            <person name="Pang K.C."/>
            <person name="Pavan W.J."/>
            <person name="Pavesi G."/>
            <person name="Pesole G."/>
            <person name="Petrovsky N."/>
            <person name="Piazza S."/>
            <person name="Reed J."/>
            <person name="Reid J.F."/>
            <person name="Ring B.Z."/>
            <person name="Ringwald M."/>
            <person name="Rost B."/>
            <person name="Ruan Y."/>
            <person name="Salzberg S.L."/>
            <person name="Sandelin A."/>
            <person name="Schneider C."/>
            <person name="Schoenbach C."/>
            <person name="Sekiguchi K."/>
            <person name="Semple C.A."/>
            <person name="Seno S."/>
            <person name="Sessa L."/>
            <person name="Sheng Y."/>
            <person name="Shibata Y."/>
            <person name="Shimada H."/>
            <person name="Shimada K."/>
            <person name="Silva D."/>
            <person name="Sinclair B."/>
            <person name="Sperling S."/>
            <person name="Stupka E."/>
            <person name="Sugiura K."/>
            <person name="Sultana R."/>
            <person name="Takenaka Y."/>
            <person name="Taki K."/>
            <person name="Tammoja K."/>
            <person name="Tan S.L."/>
            <person name="Tang S."/>
            <person name="Taylor M.S."/>
            <person name="Tegner J."/>
            <person name="Teichmann S.A."/>
            <person name="Ueda H.R."/>
            <person name="van Nimwegen E."/>
            <person name="Verardo R."/>
            <person name="Wei C.L."/>
            <person name="Yagi K."/>
            <person name="Yamanishi H."/>
            <person name="Zabarovsky E."/>
            <person name="Zhu S."/>
            <person name="Zimmer A."/>
            <person name="Hide W."/>
            <person name="Bult C."/>
            <person name="Grimmond S.M."/>
            <person name="Teasdale R.D."/>
            <person name="Liu E.T."/>
            <person name="Brusic V."/>
            <person name="Quackenbush J."/>
            <person name="Wahlestedt C."/>
            <person name="Mattick J.S."/>
            <person name="Hume D.A."/>
            <person name="Kai C."/>
            <person name="Sasaki D."/>
            <person name="Tomaru Y."/>
            <person name="Fukuda S."/>
            <person name="Kanamori-Katayama M."/>
            <person name="Suzuki M."/>
            <person name="Aoki J."/>
            <person name="Arakawa T."/>
            <person name="Iida J."/>
            <person name="Imamura K."/>
            <person name="Itoh M."/>
            <person name="Kato T."/>
            <person name="Kawaji H."/>
            <person name="Kawagashira N."/>
            <person name="Kawashima T."/>
            <person name="Kojima M."/>
            <person name="Kondo S."/>
            <person name="Konno H."/>
            <person name="Nakano K."/>
            <person name="Ninomiya N."/>
            <person name="Nishio T."/>
            <person name="Okada M."/>
            <person name="Plessy C."/>
            <person name="Shibata K."/>
            <person name="Shiraki T."/>
            <person name="Suzuki S."/>
            <person name="Tagami M."/>
            <person name="Waki K."/>
            <person name="Watahiki A."/>
            <person name="Okamura-Oho Y."/>
            <person name="Suzuki H."/>
            <person name="Kawai J."/>
            <person name="Hayashizaki Y."/>
        </authorList>
    </citation>
    <scope>NUCLEOTIDE SEQUENCE [LARGE SCALE MRNA] (ISOFORM 2)</scope>
    <source>
        <strain>C57BL/6J</strain>
        <tissue>Eye</tissue>
    </source>
</reference>
<reference key="3">
    <citation type="journal article" date="2009" name="PLoS Biol.">
        <title>Lineage-specific biology revealed by a finished genome assembly of the mouse.</title>
        <authorList>
            <person name="Church D.M."/>
            <person name="Goodstadt L."/>
            <person name="Hillier L.W."/>
            <person name="Zody M.C."/>
            <person name="Goldstein S."/>
            <person name="She X."/>
            <person name="Bult C.J."/>
            <person name="Agarwala R."/>
            <person name="Cherry J.L."/>
            <person name="DiCuccio M."/>
            <person name="Hlavina W."/>
            <person name="Kapustin Y."/>
            <person name="Meric P."/>
            <person name="Maglott D."/>
            <person name="Birtle Z."/>
            <person name="Marques A.C."/>
            <person name="Graves T."/>
            <person name="Zhou S."/>
            <person name="Teague B."/>
            <person name="Potamousis K."/>
            <person name="Churas C."/>
            <person name="Place M."/>
            <person name="Herschleb J."/>
            <person name="Runnheim R."/>
            <person name="Forrest D."/>
            <person name="Amos-Landgraf J."/>
            <person name="Schwartz D.C."/>
            <person name="Cheng Z."/>
            <person name="Lindblad-Toh K."/>
            <person name="Eichler E.E."/>
            <person name="Ponting C.P."/>
        </authorList>
    </citation>
    <scope>NUCLEOTIDE SEQUENCE [LARGE SCALE GENOMIC DNA]</scope>
    <source>
        <strain>C57BL/6J</strain>
    </source>
</reference>
<reference key="4">
    <citation type="journal article" date="2004" name="Genome Res.">
        <title>The status, quality, and expansion of the NIH full-length cDNA project: the Mammalian Gene Collection (MGC).</title>
        <authorList>
            <consortium name="The MGC Project Team"/>
        </authorList>
    </citation>
    <scope>NUCLEOTIDE SEQUENCE [LARGE SCALE MRNA] (ISOFORM 2)</scope>
    <source>
        <strain>C57BL/6J</strain>
        <tissue>Brain</tissue>
    </source>
</reference>
<reference key="5">
    <citation type="journal article" date="1998" name="Gene">
        <title>Identification and functional analysis of the mouse lens filensin gene promoter.</title>
        <authorList>
            <person name="Masaki S."/>
            <person name="Kamachi Y."/>
            <person name="Quinlan R.A."/>
            <person name="Yonezawa S."/>
            <person name="Kondoh H."/>
        </authorList>
    </citation>
    <scope>NUCLEOTIDE SEQUENCE [GENOMIC DNA] OF 1-21</scope>
    <source>
        <strain>129/SvJ</strain>
    </source>
</reference>
<reference key="6">
    <citation type="journal article" date="2004" name="Invest. Ophthalmol. Vis. Sci.">
        <title>Characterization of a mutation in the lens-specific CP49 in the 129 strain of mouse.</title>
        <authorList>
            <person name="Alizadeh A."/>
            <person name="Clark J."/>
            <person name="Seeberger T."/>
            <person name="Hess J."/>
            <person name="Blankenship T."/>
            <person name="FitzGerald P.G."/>
        </authorList>
    </citation>
    <scope>TISSUE SPECIFICITY</scope>
</reference>
<reference key="7">
    <citation type="journal article" date="2009" name="Invest. Ophthalmol. Vis. Sci.">
        <title>Periplakin interactions with lens intermediate and beaded filaments.</title>
        <authorList>
            <person name="Yoon K.H."/>
            <person name="FitzGerald P.G."/>
        </authorList>
    </citation>
    <scope>IDENTIFICATION IN A COMPLEX WITH PPL AND BFSP2</scope>
    <scope>INTERACTION WITH BFSP2</scope>
    <scope>SUBCELLULAR LOCATION</scope>
    <scope>TISSUE SPECIFICITY</scope>
    <scope>DEVELOPMENTAL STAGE</scope>
</reference>
<reference key="8">
    <citation type="journal article" date="2011" name="Dev. Biol.">
        <title>Periaxin is required for hexagonal geometry and membrane organization of mature lens fibers.</title>
        <authorList>
            <person name="Maddala R."/>
            <person name="Skiba N.P."/>
            <person name="Lalane R. III"/>
            <person name="Sherman D.L."/>
            <person name="Brophy P.J."/>
            <person name="Rao P.V."/>
        </authorList>
    </citation>
    <scope>TISSUE SPECIFICITY</scope>
    <scope>IDENTIFICATION IN A COMPLEX WITH EZR; AHNAK; PRX; BFSP2; ANK2; PLEC; VIM AND SPECTRIN</scope>
</reference>
<reference key="9">
    <citation type="journal article" date="2016" name="Mol. Vis.">
        <title>Expression of the type VI intermediate filament proteins CP49 and filensin in the mouse lens epithelium.</title>
        <authorList>
            <person name="FitzGerald P."/>
            <person name="Sun N."/>
            <person name="Shibata B."/>
            <person name="Hess J.F."/>
        </authorList>
    </citation>
    <scope>FUNCTION</scope>
    <scope>SUBCELLULAR LOCATION</scope>
    <scope>TISSUE SPECIFICITY</scope>
    <scope>DISRUPTION PHENOTYPE</scope>
</reference>
<sequence length="669" mass="73669">MYRRSYVFQARQERYERAQPAGPAAQPGGTAPGLAALQALGERVAVQVQRARALQQRHAGLRRQLDAFQRLGEQPGPEDALARHVEANLQRARDLTAEHARLERQEAEAQRALDEFRSKYENECECQLVLKEMLERLNKEADEALLRNLHLQLEAQFLQADISVAKDRYKKNLLEIQTYITVLQQIVQTAPQVSLVTGMRESGLLMQEKLFTEREVAALQNQLEEGREAVTHLQAQKAELQAQTTALEQAIKHAHECYDEELQLYNEQIENLRKEIEEAERSLERSSYDCRQLAVAQQTLRNELDRYHRIIEIEGSRLSSVFIETPISLITPSHGAPLSLGSSVKDLARAVQDITAAKPRQKALPKSLPKRKEIIAQDKVEETLEDAPLKPPQEPKALQVERKAEGGSQPGAGGGHGVSPTQEGGPEDVPDGGQISKAFGKLCKVVKERVSGHKEPEPEPPTDLFTKGRHVLVTGESSFVDPEFYSSSIPARGGVVISIEEDSMHHDGHVEPSPGQPMPPVENGQGVPQGREGDHSNHQQGTDKNGLRAKEPKDLEEKDDDGKKEAEGSRRPCPVIIPGPDEPSTSHSQTSGSNQGGPVGPASKSSSLLAKGPSKALSIKKVEVVESIEKISTESIQTYEETSVIVETLIGKSKGNKKLGEKSLPDTRA</sequence>
<dbReference type="EMBL" id="AB003147">
    <property type="protein sequence ID" value="BAA24139.1"/>
    <property type="molecule type" value="mRNA"/>
</dbReference>
<dbReference type="EMBL" id="AK143180">
    <property type="protein sequence ID" value="BAE25294.1"/>
    <property type="molecule type" value="mRNA"/>
</dbReference>
<dbReference type="EMBL" id="AK053766">
    <property type="protein sequence ID" value="BAC35514.1"/>
    <property type="molecule type" value="mRNA"/>
</dbReference>
<dbReference type="EMBL" id="AL807801">
    <property type="status" value="NOT_ANNOTATED_CDS"/>
    <property type="molecule type" value="Genomic_DNA"/>
</dbReference>
<dbReference type="EMBL" id="BC057580">
    <property type="protein sequence ID" value="AAH57580.1"/>
    <property type="molecule type" value="mRNA"/>
</dbReference>
<dbReference type="EMBL" id="AB010375">
    <property type="protein sequence ID" value="BAA28377.1"/>
    <property type="molecule type" value="Genomic_DNA"/>
</dbReference>
<dbReference type="CCDS" id="CCDS16811.1">
    <molecule id="A2AMT1-2"/>
</dbReference>
<dbReference type="CCDS" id="CCDS71154.1">
    <molecule id="A2AMT1-1"/>
</dbReference>
<dbReference type="RefSeq" id="NP_001277990.1">
    <molecule id="A2AMT1-1"/>
    <property type="nucleotide sequence ID" value="NM_001291061.2"/>
</dbReference>
<dbReference type="RefSeq" id="NP_033881.2">
    <molecule id="A2AMT1-2"/>
    <property type="nucleotide sequence ID" value="NM_009751.3"/>
</dbReference>
<dbReference type="SMR" id="A2AMT1"/>
<dbReference type="BioGRID" id="198340">
    <property type="interactions" value="1"/>
</dbReference>
<dbReference type="CORUM" id="A2AMT1"/>
<dbReference type="FunCoup" id="A2AMT1">
    <property type="interactions" value="120"/>
</dbReference>
<dbReference type="STRING" id="10090.ENSMUSP00000096899"/>
<dbReference type="GlyGen" id="A2AMT1">
    <property type="glycosylation" value="1 site"/>
</dbReference>
<dbReference type="iPTMnet" id="A2AMT1"/>
<dbReference type="PhosphoSitePlus" id="A2AMT1"/>
<dbReference type="PaxDb" id="10090-ENSMUSP00000096899"/>
<dbReference type="ProteomicsDB" id="265209">
    <molecule id="A2AMT1-1"/>
</dbReference>
<dbReference type="ProteomicsDB" id="265210">
    <molecule id="A2AMT1-2"/>
</dbReference>
<dbReference type="Antibodypedia" id="9222">
    <property type="antibodies" value="294 antibodies from 28 providers"/>
</dbReference>
<dbReference type="DNASU" id="12075"/>
<dbReference type="Ensembl" id="ENSMUST00000028907.14">
    <molecule id="A2AMT1-2"/>
    <property type="protein sequence ID" value="ENSMUSP00000028907.8"/>
    <property type="gene ID" value="ENSMUSG00000027420.14"/>
</dbReference>
<dbReference type="Ensembl" id="ENSMUST00000099296.4">
    <molecule id="A2AMT1-1"/>
    <property type="protein sequence ID" value="ENSMUSP00000096899.4"/>
    <property type="gene ID" value="ENSMUSG00000027420.14"/>
</dbReference>
<dbReference type="GeneID" id="12075"/>
<dbReference type="KEGG" id="mmu:12075"/>
<dbReference type="UCSC" id="uc008mqh.1">
    <molecule id="A2AMT1-2"/>
    <property type="organism name" value="mouse"/>
</dbReference>
<dbReference type="UCSC" id="uc012cfe.1">
    <molecule id="A2AMT1-1"/>
    <property type="organism name" value="mouse"/>
</dbReference>
<dbReference type="AGR" id="MGI:101770"/>
<dbReference type="CTD" id="631"/>
<dbReference type="MGI" id="MGI:101770">
    <property type="gene designation" value="Bfsp1"/>
</dbReference>
<dbReference type="VEuPathDB" id="HostDB:ENSMUSG00000027420"/>
<dbReference type="eggNOG" id="ENOG502QRCH">
    <property type="taxonomic scope" value="Eukaryota"/>
</dbReference>
<dbReference type="GeneTree" id="ENSGT00390000016976"/>
<dbReference type="HOGENOM" id="CLU_028949_0_0_1"/>
<dbReference type="InParanoid" id="A2AMT1"/>
<dbReference type="OMA" id="IQTTPRV"/>
<dbReference type="OrthoDB" id="9942423at2759"/>
<dbReference type="PhylomeDB" id="A2AMT1"/>
<dbReference type="TreeFam" id="TF331671"/>
<dbReference type="BioGRID-ORCS" id="12075">
    <property type="hits" value="0 hits in 78 CRISPR screens"/>
</dbReference>
<dbReference type="PRO" id="PR:A2AMT1"/>
<dbReference type="Proteomes" id="UP000000589">
    <property type="component" value="Chromosome 2"/>
</dbReference>
<dbReference type="RNAct" id="A2AMT1">
    <property type="molecule type" value="protein"/>
</dbReference>
<dbReference type="Bgee" id="ENSMUSG00000027420">
    <property type="expression patterns" value="Expressed in lens of camera-type eye and 59 other cell types or tissues"/>
</dbReference>
<dbReference type="GO" id="GO:0005938">
    <property type="term" value="C:cell cortex"/>
    <property type="evidence" value="ECO:0007669"/>
    <property type="project" value="UniProtKB-SubCell"/>
</dbReference>
<dbReference type="GO" id="GO:0005737">
    <property type="term" value="C:cytoplasm"/>
    <property type="evidence" value="ECO:0000314"/>
    <property type="project" value="UniProtKB"/>
</dbReference>
<dbReference type="GO" id="GO:0005882">
    <property type="term" value="C:intermediate filament"/>
    <property type="evidence" value="ECO:0000314"/>
    <property type="project" value="UniProtKB"/>
</dbReference>
<dbReference type="GO" id="GO:0005886">
    <property type="term" value="C:plasma membrane"/>
    <property type="evidence" value="ECO:0000314"/>
    <property type="project" value="UniProtKB"/>
</dbReference>
<dbReference type="GO" id="GO:0005212">
    <property type="term" value="F:structural constituent of eye lens"/>
    <property type="evidence" value="ECO:0000314"/>
    <property type="project" value="MGI"/>
</dbReference>
<dbReference type="GO" id="GO:0048469">
    <property type="term" value="P:cell maturation"/>
    <property type="evidence" value="ECO:0000315"/>
    <property type="project" value="MGI"/>
</dbReference>
<dbReference type="GO" id="GO:0045109">
    <property type="term" value="P:intermediate filament organization"/>
    <property type="evidence" value="ECO:0000315"/>
    <property type="project" value="UniProtKB"/>
</dbReference>
<dbReference type="GO" id="GO:0070307">
    <property type="term" value="P:lens fiber cell development"/>
    <property type="evidence" value="ECO:0000314"/>
    <property type="project" value="MGI"/>
</dbReference>
<dbReference type="FunFam" id="1.20.5.170:FF:000094">
    <property type="entry name" value="Beaded filament structural protein 1"/>
    <property type="match status" value="1"/>
</dbReference>
<dbReference type="FunFam" id="1.20.5.1160:FF:000009">
    <property type="entry name" value="filensin isoform X2"/>
    <property type="match status" value="1"/>
</dbReference>
<dbReference type="Gene3D" id="1.20.5.170">
    <property type="match status" value="1"/>
</dbReference>
<dbReference type="Gene3D" id="1.20.5.1160">
    <property type="entry name" value="Vasodilator-stimulated phosphoprotein"/>
    <property type="match status" value="1"/>
</dbReference>
<dbReference type="InterPro" id="IPR042358">
    <property type="entry name" value="BFSP1"/>
</dbReference>
<dbReference type="InterPro" id="IPR039008">
    <property type="entry name" value="IF_rod_dom"/>
</dbReference>
<dbReference type="PANTHER" id="PTHR14069">
    <property type="entry name" value="FILENSIN"/>
    <property type="match status" value="1"/>
</dbReference>
<dbReference type="PANTHER" id="PTHR14069:SF0">
    <property type="entry name" value="FILENSIN"/>
    <property type="match status" value="1"/>
</dbReference>
<dbReference type="Pfam" id="PF00038">
    <property type="entry name" value="Filament"/>
    <property type="match status" value="1"/>
</dbReference>
<dbReference type="SMART" id="SM01391">
    <property type="entry name" value="Filament"/>
    <property type="match status" value="1"/>
</dbReference>
<dbReference type="PROSITE" id="PS51842">
    <property type="entry name" value="IF_ROD_2"/>
    <property type="match status" value="1"/>
</dbReference>
<protein>
    <recommendedName>
        <fullName evidence="11 12">Filensin</fullName>
    </recommendedName>
    <alternativeName>
        <fullName>Beaded filament structural protein 1</fullName>
    </alternativeName>
    <alternativeName>
        <fullName>Lens fiber cell beaded-filament structural protein CP 95</fullName>
        <shortName>CP95</shortName>
    </alternativeName>
    <component>
        <recommendedName>
            <fullName evidence="1">Filensin C-terminal fragment</fullName>
        </recommendedName>
    </component>
    <component>
        <recommendedName>
            <fullName evidence="1">Filensin N-terminal fragment</fullName>
        </recommendedName>
    </component>
</protein>
<proteinExistence type="evidence at protein level"/>
<comment type="function">
    <text evidence="2 8">Required for the correct formation of lens intermediate filaments as part of a complex composed of BFSP1, BFSP2 and CRYAA (PubMed:27559293). Involved in altering the calcium regulation of MIP water permeability (By similarity).</text>
</comment>
<comment type="subunit">
    <text evidence="1 2 6 7">Part of a complex required for lens intermediate filament formation composed of BFSP1, BFSP2 and CRYAA (By similarity). Identified in a complex that contains VIM, EZR, AHNAK, BFSP1, BFSP2, ANK2, PLEC, PRX and spectrin (PubMed:21745462). Found in a complex composed of PPL (via C-terminal linker domain), BFSP1 and BFSP2 in the retinal lens (PubMed:19029034). Within the complex interacts with BFSP2 (PubMed:19029034). Interacts (via C-terminus) with MIP (via C-terminus) in aged lens fiber cells (By similarity).</text>
</comment>
<comment type="subcellular location">
    <subcellularLocation>
        <location evidence="6">Cell membrane</location>
        <topology evidence="1">Peripheral membrane protein</topology>
        <orientation evidence="1">Cytoplasmic side</orientation>
    </subcellularLocation>
    <subcellularLocation>
        <location evidence="6 8">Cytoplasm</location>
    </subcellularLocation>
    <subcellularLocation>
        <location evidence="1">Cytoplasm</location>
        <location evidence="1">Cytoskeleton</location>
    </subcellularLocation>
    <subcellularLocation>
        <location evidence="1">Cytoplasm</location>
        <location evidence="1">Cell cortex</location>
    </subcellularLocation>
</comment>
<comment type="alternative products">
    <event type="alternative splicing"/>
    <isoform>
        <id>A2AMT1-1</id>
        <name>1</name>
        <sequence type="displayed"/>
    </isoform>
    <isoform>
        <id>A2AMT1-2</id>
        <name>2</name>
        <sequence type="described" ref="VSP_024920"/>
    </isoform>
</comment>
<comment type="tissue specificity">
    <text evidence="5 6 7 8">Detected in eye lens fiber cells (at protein level) (PubMed:14985306, PubMed:19029034, PubMed:21745462). Expressed in retinal lens epithelial cells (at protein level) (PubMed:27559293).</text>
</comment>
<comment type="developmental stage">
    <text evidence="6">First expressed in retinal lens fiber cells during elongation and differentiation, becoming localized to the cytoplasm as fiber cells mature and the beaded filament network forms at 3 weeks of age.</text>
</comment>
<comment type="PTM">
    <text evidence="1">Proteolytically cleaved during lens cell fiber differentiation with increased fragmentation as fiber cell age increases.</text>
</comment>
<comment type="PTM">
    <molecule>Filensin C-terminal fragment</molecule>
    <text evidence="1">Myristoylated at Gly-432 following proteolytic cleavage at Asp-431.</text>
</comment>
<comment type="PTM">
    <molecule>Filensin N-terminal fragment</molecule>
    <text evidence="1">Acetylated at Ala-35 following proteolytic cleavage at Leu-34.</text>
</comment>
<comment type="disruption phenotype">
    <text evidence="8">Complete loss of beaded filament structures in lens epithelial cells.</text>
</comment>
<comment type="similarity">
    <text evidence="3">Belongs to the intermediate filament family.</text>
</comment>
<evidence type="ECO:0000250" key="1">
    <source>
        <dbReference type="UniProtKB" id="Q06002"/>
    </source>
</evidence>
<evidence type="ECO:0000250" key="2">
    <source>
        <dbReference type="UniProtKB" id="Q12934"/>
    </source>
</evidence>
<evidence type="ECO:0000255" key="3">
    <source>
        <dbReference type="PROSITE-ProRule" id="PRU01188"/>
    </source>
</evidence>
<evidence type="ECO:0000256" key="4">
    <source>
        <dbReference type="SAM" id="MobiDB-lite"/>
    </source>
</evidence>
<evidence type="ECO:0000269" key="5">
    <source>
    </source>
</evidence>
<evidence type="ECO:0000269" key="6">
    <source>
    </source>
</evidence>
<evidence type="ECO:0000269" key="7">
    <source>
    </source>
</evidence>
<evidence type="ECO:0000269" key="8">
    <source>
    </source>
</evidence>
<evidence type="ECO:0000303" key="9">
    <source>
    </source>
</evidence>
<evidence type="ECO:0000303" key="10">
    <source>
    </source>
</evidence>
<evidence type="ECO:0000303" key="11">
    <source>
    </source>
</evidence>
<evidence type="ECO:0000303" key="12">
    <source>
    </source>
</evidence>
<evidence type="ECO:0000305" key="13"/>
<accession>A2AMT1</accession>
<accession>O54770</accession>
<accession>Q3UPV0</accession>
<accession>Q6PFF8</accession>
<accession>Q8BKB1</accession>
<accession>Q9QWM4</accession>
<feature type="chain" id="PRO_0000285854" description="Filensin">
    <location>
        <begin position="1"/>
        <end position="669"/>
    </location>
</feature>
<feature type="chain" id="PRO_0000448672" description="Filensin N-terminal fragment" evidence="1">
    <location>
        <begin position="35"/>
        <end position="431"/>
    </location>
</feature>
<feature type="chain" id="PRO_0000448673" description="Filensin C-terminal fragment" evidence="1">
    <location>
        <begin position="432"/>
        <end position="669"/>
    </location>
</feature>
<feature type="domain" description="IF rod" evidence="3">
    <location>
        <begin position="33"/>
        <end position="318"/>
    </location>
</feature>
<feature type="region of interest" description="Head">
    <location>
        <begin position="1"/>
        <end position="33"/>
    </location>
</feature>
<feature type="region of interest" description="Coil 1A">
    <location>
        <begin position="34"/>
        <end position="68"/>
    </location>
</feature>
<feature type="region of interest" description="Linker 1">
    <location>
        <begin position="69"/>
        <end position="77"/>
    </location>
</feature>
<feature type="region of interest" description="Coil 1B">
    <location>
        <begin position="78"/>
        <end position="177"/>
    </location>
</feature>
<feature type="region of interest" description="Linker 12">
    <location>
        <begin position="178"/>
        <end position="194"/>
    </location>
</feature>
<feature type="region of interest" description="Coil 2">
    <location>
        <begin position="195"/>
        <end position="318"/>
    </location>
</feature>
<feature type="region of interest" description="Tail">
    <location>
        <begin position="319"/>
        <end position="669"/>
    </location>
</feature>
<feature type="region of interest" description="Disordered" evidence="4">
    <location>
        <begin position="380"/>
        <end position="435"/>
    </location>
</feature>
<feature type="region of interest" description="Disordered" evidence="4">
    <location>
        <begin position="449"/>
        <end position="468"/>
    </location>
</feature>
<feature type="region of interest" description="Disordered" evidence="4">
    <location>
        <begin position="505"/>
        <end position="618"/>
    </location>
</feature>
<feature type="compositionally biased region" description="Gly residues" evidence="4">
    <location>
        <begin position="408"/>
        <end position="417"/>
    </location>
</feature>
<feature type="compositionally biased region" description="Basic and acidic residues" evidence="4">
    <location>
        <begin position="545"/>
        <end position="570"/>
    </location>
</feature>
<feature type="compositionally biased region" description="Polar residues" evidence="4">
    <location>
        <begin position="583"/>
        <end position="593"/>
    </location>
</feature>
<feature type="site" description="Cleavage" evidence="1">
    <location>
        <begin position="34"/>
        <end position="35"/>
    </location>
</feature>
<feature type="site" description="Cleavage (by CASP2, CASP3, and CASP7)" evidence="2">
    <location>
        <begin position="431"/>
        <end position="432"/>
    </location>
</feature>
<feature type="site" description="Interaction with MIP" evidence="1">
    <location>
        <position position="457"/>
    </location>
</feature>
<feature type="modified residue" description="Phosphoserine" evidence="1">
    <location>
        <position position="5"/>
    </location>
</feature>
<feature type="modified residue" description="N-acetylalanine" evidence="1">
    <location>
        <position position="35"/>
    </location>
</feature>
<feature type="modified residue" description="Phosphoserine" evidence="1">
    <location>
        <position position="339"/>
    </location>
</feature>
<feature type="modified residue" description="Phosphoserine" evidence="1">
    <location>
        <position position="513"/>
    </location>
</feature>
<feature type="modified residue" description="Phosphothreonine" evidence="1">
    <location>
        <position position="585"/>
    </location>
</feature>
<feature type="lipid moiety-binding region" description="N-myristoyl glycine" evidence="1">
    <location>
        <position position="432"/>
    </location>
</feature>
<feature type="splice variant" id="VSP_024920" description="In isoform 2." evidence="9 10">
    <location>
        <begin position="202"/>
        <end position="207"/>
    </location>
</feature>
<feature type="sequence conflict" description="In Ref. 1; BAA24139." evidence="13" ref="1">
    <original>Q</original>
    <variation>H</variation>
    <location>
        <position position="185"/>
    </location>
</feature>
<feature type="sequence conflict" description="In Ref. 1; BAA24139." evidence="13" ref="1">
    <original>R</original>
    <variation>S</variation>
    <location>
        <position position="291"/>
    </location>
</feature>
<feature type="sequence conflict" description="In Ref. 1; BAA24139." evidence="13" ref="1">
    <original>P</original>
    <variation>S</variation>
    <location>
        <position position="337"/>
    </location>
</feature>
<feature type="sequence conflict" description="In Ref. 1; BAA24139." evidence="13" ref="1">
    <original>EP</original>
    <variation>TR</variation>
    <location>
        <begin position="394"/>
        <end position="395"/>
    </location>
</feature>
<feature type="sequence conflict" description="In Ref. 2; BAE25294." evidence="13" ref="2">
    <original>G</original>
    <variation>R</variation>
    <location>
        <position position="440"/>
    </location>
</feature>
<feature type="sequence conflict" description="In Ref. 1; BAA24139." evidence="13" ref="1">
    <original>D</original>
    <variation>N</variation>
    <location>
        <position position="463"/>
    </location>
</feature>
<gene>
    <name type="primary">Bfsp1</name>
</gene>